<dbReference type="EC" id="2.3.2.-" evidence="1"/>
<dbReference type="EMBL" id="BC097477">
    <property type="protein sequence ID" value="AAH97477.1"/>
    <property type="molecule type" value="mRNA"/>
</dbReference>
<dbReference type="RefSeq" id="NP_001020047.1">
    <property type="nucleotide sequence ID" value="NM_001024876.1"/>
</dbReference>
<dbReference type="SMR" id="Q4V8A0"/>
<dbReference type="FunCoup" id="Q4V8A0">
    <property type="interactions" value="2388"/>
</dbReference>
<dbReference type="STRING" id="10116.ENSRNOP00000005376"/>
<dbReference type="PhosphoSitePlus" id="Q4V8A0"/>
<dbReference type="PaxDb" id="10116-ENSRNOP00000005376"/>
<dbReference type="Ensembl" id="ENSRNOT00000005376.6">
    <property type="protein sequence ID" value="ENSRNOP00000005376.4"/>
    <property type="gene ID" value="ENSRNOG00000003964.8"/>
</dbReference>
<dbReference type="GeneID" id="299957"/>
<dbReference type="KEGG" id="rno:299957"/>
<dbReference type="UCSC" id="RGD:1305156">
    <property type="organism name" value="rat"/>
</dbReference>
<dbReference type="AGR" id="RGD:1305156"/>
<dbReference type="CTD" id="286053"/>
<dbReference type="RGD" id="1305156">
    <property type="gene designation" value="Nsmce2"/>
</dbReference>
<dbReference type="eggNOG" id="KOG2979">
    <property type="taxonomic scope" value="Eukaryota"/>
</dbReference>
<dbReference type="GeneTree" id="ENSGT00390000013961"/>
<dbReference type="HOGENOM" id="CLU_106543_0_0_1"/>
<dbReference type="InParanoid" id="Q4V8A0"/>
<dbReference type="OrthoDB" id="26899at2759"/>
<dbReference type="PhylomeDB" id="Q4V8A0"/>
<dbReference type="TreeFam" id="TF324383"/>
<dbReference type="Reactome" id="R-RNO-3108214">
    <property type="pathway name" value="SUMOylation of DNA damage response and repair proteins"/>
</dbReference>
<dbReference type="UniPathway" id="UPA00886"/>
<dbReference type="PRO" id="PR:Q4V8A0"/>
<dbReference type="Proteomes" id="UP000002494">
    <property type="component" value="Chromosome 7"/>
</dbReference>
<dbReference type="Bgee" id="ENSRNOG00000003964">
    <property type="expression patterns" value="Expressed in ovary and 19 other cell types or tissues"/>
</dbReference>
<dbReference type="ExpressionAtlas" id="Q4V8A0">
    <property type="expression patterns" value="baseline and differential"/>
</dbReference>
<dbReference type="GO" id="GO:0000781">
    <property type="term" value="C:chromosome, telomeric region"/>
    <property type="evidence" value="ECO:0000250"/>
    <property type="project" value="UniProtKB"/>
</dbReference>
<dbReference type="GO" id="GO:0005634">
    <property type="term" value="C:nucleus"/>
    <property type="evidence" value="ECO:0000318"/>
    <property type="project" value="GO_Central"/>
</dbReference>
<dbReference type="GO" id="GO:0016605">
    <property type="term" value="C:PML body"/>
    <property type="evidence" value="ECO:0000250"/>
    <property type="project" value="UniProtKB"/>
</dbReference>
<dbReference type="GO" id="GO:0030915">
    <property type="term" value="C:Smc5-Smc6 complex"/>
    <property type="evidence" value="ECO:0000250"/>
    <property type="project" value="UniProtKB"/>
</dbReference>
<dbReference type="GO" id="GO:0061665">
    <property type="term" value="F:SUMO ligase activity"/>
    <property type="evidence" value="ECO:0000318"/>
    <property type="project" value="GO_Central"/>
</dbReference>
<dbReference type="GO" id="GO:0019789">
    <property type="term" value="F:SUMO transferase activity"/>
    <property type="evidence" value="ECO:0000250"/>
    <property type="project" value="UniProtKB"/>
</dbReference>
<dbReference type="GO" id="GO:0004842">
    <property type="term" value="F:ubiquitin-protein transferase activity"/>
    <property type="evidence" value="ECO:0007669"/>
    <property type="project" value="InterPro"/>
</dbReference>
<dbReference type="GO" id="GO:0008270">
    <property type="term" value="F:zinc ion binding"/>
    <property type="evidence" value="ECO:0007669"/>
    <property type="project" value="UniProtKB-KW"/>
</dbReference>
<dbReference type="GO" id="GO:0051301">
    <property type="term" value="P:cell division"/>
    <property type="evidence" value="ECO:0007669"/>
    <property type="project" value="UniProtKB-KW"/>
</dbReference>
<dbReference type="GO" id="GO:0090398">
    <property type="term" value="P:cellular senescence"/>
    <property type="evidence" value="ECO:0000250"/>
    <property type="project" value="UniProtKB"/>
</dbReference>
<dbReference type="GO" id="GO:0000724">
    <property type="term" value="P:double-strand break repair via homologous recombination"/>
    <property type="evidence" value="ECO:0000250"/>
    <property type="project" value="UniProtKB"/>
</dbReference>
<dbReference type="GO" id="GO:0034184">
    <property type="term" value="P:positive regulation of maintenance of mitotic sister chromatid cohesion"/>
    <property type="evidence" value="ECO:0000250"/>
    <property type="project" value="UniProtKB"/>
</dbReference>
<dbReference type="GO" id="GO:0045842">
    <property type="term" value="P:positive regulation of mitotic metaphase/anaphase transition"/>
    <property type="evidence" value="ECO:0000250"/>
    <property type="project" value="UniProtKB"/>
</dbReference>
<dbReference type="GO" id="GO:0016925">
    <property type="term" value="P:protein sumoylation"/>
    <property type="evidence" value="ECO:0000318"/>
    <property type="project" value="GO_Central"/>
</dbReference>
<dbReference type="GO" id="GO:0016567">
    <property type="term" value="P:protein ubiquitination"/>
    <property type="evidence" value="ECO:0007669"/>
    <property type="project" value="InterPro"/>
</dbReference>
<dbReference type="GO" id="GO:0000722">
    <property type="term" value="P:telomere maintenance via recombination"/>
    <property type="evidence" value="ECO:0000250"/>
    <property type="project" value="UniProtKB"/>
</dbReference>
<dbReference type="CDD" id="cd16651">
    <property type="entry name" value="SPL-RING_NSE2"/>
    <property type="match status" value="1"/>
</dbReference>
<dbReference type="FunFam" id="3.30.40.10:FF:000343">
    <property type="entry name" value="E3 SUMO-protein ligase NSE2 isoform X1"/>
    <property type="match status" value="1"/>
</dbReference>
<dbReference type="Gene3D" id="3.30.40.10">
    <property type="entry name" value="Zinc/RING finger domain, C3HC4 (zinc finger)"/>
    <property type="match status" value="1"/>
</dbReference>
<dbReference type="InterPro" id="IPR026846">
    <property type="entry name" value="Nse2(Mms21)"/>
</dbReference>
<dbReference type="InterPro" id="IPR003613">
    <property type="entry name" value="Ubox_domain"/>
</dbReference>
<dbReference type="InterPro" id="IPR004181">
    <property type="entry name" value="Znf_MIZ"/>
</dbReference>
<dbReference type="InterPro" id="IPR013083">
    <property type="entry name" value="Znf_RING/FYVE/PHD"/>
</dbReference>
<dbReference type="PANTHER" id="PTHR21330">
    <property type="entry name" value="E3 SUMO-PROTEIN LIGASE NSE2"/>
    <property type="match status" value="1"/>
</dbReference>
<dbReference type="PANTHER" id="PTHR21330:SF1">
    <property type="entry name" value="E3 SUMO-PROTEIN LIGASE NSE2"/>
    <property type="match status" value="1"/>
</dbReference>
<dbReference type="Pfam" id="PF11789">
    <property type="entry name" value="zf-Nse"/>
    <property type="match status" value="1"/>
</dbReference>
<dbReference type="SMART" id="SM00504">
    <property type="entry name" value="Ubox"/>
    <property type="match status" value="1"/>
</dbReference>
<dbReference type="SUPFAM" id="SSF57850">
    <property type="entry name" value="RING/U-box"/>
    <property type="match status" value="1"/>
</dbReference>
<dbReference type="PROSITE" id="PS51044">
    <property type="entry name" value="ZF_SP_RING"/>
    <property type="match status" value="1"/>
</dbReference>
<protein>
    <recommendedName>
        <fullName>E3 SUMO-protein ligase NSE2</fullName>
        <ecNumber evidence="1">2.3.2.-</ecNumber>
    </recommendedName>
    <alternativeName>
        <fullName evidence="3">E3 SUMO-protein transferase NSE2</fullName>
    </alternativeName>
    <alternativeName>
        <fullName>MMS21 homolog</fullName>
    </alternativeName>
    <alternativeName>
        <fullName>Non-structural maintenance of chromosomes element 2 homolog</fullName>
        <shortName>Non-SMC element 2 homolog</shortName>
    </alternativeName>
</protein>
<feature type="chain" id="PRO_0000270941" description="E3 SUMO-protein ligase NSE2">
    <location>
        <begin position="1"/>
        <end position="247"/>
    </location>
</feature>
<feature type="zinc finger region" description="SP-RING-type" evidence="2">
    <location>
        <begin position="154"/>
        <end position="240"/>
    </location>
</feature>
<feature type="binding site" evidence="2">
    <location>
        <position position="185"/>
    </location>
    <ligand>
        <name>Zn(2+)</name>
        <dbReference type="ChEBI" id="CHEBI:29105"/>
    </ligand>
</feature>
<feature type="binding site" evidence="2">
    <location>
        <position position="187"/>
    </location>
    <ligand>
        <name>Zn(2+)</name>
        <dbReference type="ChEBI" id="CHEBI:29105"/>
    </ligand>
</feature>
<feature type="binding site" evidence="2">
    <location>
        <position position="210"/>
    </location>
    <ligand>
        <name>Zn(2+)</name>
        <dbReference type="ChEBI" id="CHEBI:29105"/>
    </ligand>
</feature>
<feature type="binding site" evidence="2">
    <location>
        <position position="215"/>
    </location>
    <ligand>
        <name>Zn(2+)</name>
        <dbReference type="ChEBI" id="CHEBI:29105"/>
    </ligand>
</feature>
<feature type="modified residue" description="N-acetylmethionine" evidence="1">
    <location>
        <position position="1"/>
    </location>
</feature>
<feature type="modified residue" description="Phosphoserine" evidence="1">
    <location>
        <position position="116"/>
    </location>
</feature>
<feature type="cross-link" description="Glycyl lysine isopeptide (Lys-Gly) (interchain with G-Cter in SUMO2)" evidence="1">
    <location>
        <position position="90"/>
    </location>
</feature>
<feature type="cross-link" description="Glycyl lysine isopeptide (Lys-Gly) (interchain with G-Cter in SUMO2)" evidence="1">
    <location>
        <position position="107"/>
    </location>
</feature>
<feature type="cross-link" description="Glycyl lysine isopeptide (Lys-Gly) (interchain with G-Cter in SUMO2)" evidence="1">
    <location>
        <position position="125"/>
    </location>
</feature>
<feature type="cross-link" description="Glycyl lysine isopeptide (Lys-Gly) (interchain with G-Cter in SUMO2)" evidence="1">
    <location>
        <position position="130"/>
    </location>
</feature>
<gene>
    <name type="primary">Nsmce2</name>
    <name type="synonym">Mms21</name>
</gene>
<comment type="function">
    <text evidence="1">E3 SUMO-protein ligase component of the SMC5-SMC6 complex, a complex involved in DNA double-strand break repair by homologous recombination. Is not be required for the stability of the complex. The complex may promote sister chromatid homologous recombination by recruiting the SMC1-SMC3 cohesin complex to double-strand breaks. Acts as an E3 ligase mediating SUMO attachment to various proteins such as SMC6L1 and TSNAX, the shelterin complex subunits TERF1, TERF2, TINF2 and TERF2IP, RAD51AP1, and maybe the cohesin components RAD21 and STAG2. Required for recruitment of telomeres to PML nuclear bodies. Required for sister chromatid cohesion during prometaphase and mitotic progression.</text>
</comment>
<comment type="pathway">
    <text evidence="1">Protein modification; protein sumoylation.</text>
</comment>
<comment type="subunit">
    <text evidence="1">Component of the SMC5-SMC6 complex which consists at least of SMC5, SMC6, NSMCE2, NSMCE1, NSMCE4A or EID3 and NSMCE3.</text>
</comment>
<comment type="subcellular location">
    <subcellularLocation>
        <location evidence="1">Nucleus</location>
    </subcellularLocation>
    <subcellularLocation>
        <location evidence="1">Chromosome</location>
        <location evidence="1">Telomere</location>
    </subcellularLocation>
    <subcellularLocation>
        <location evidence="1">Nucleus</location>
        <location evidence="1">PML body</location>
    </subcellularLocation>
    <text evidence="1">Localizes to PML nuclear bodies in ALT cell lines.</text>
</comment>
<comment type="PTM">
    <text evidence="1">Sumoylated, possibly via autosumoylation.</text>
</comment>
<comment type="similarity">
    <text evidence="3">Belongs to the NSE2 family.</text>
</comment>
<organism>
    <name type="scientific">Rattus norvegicus</name>
    <name type="common">Rat</name>
    <dbReference type="NCBI Taxonomy" id="10116"/>
    <lineage>
        <taxon>Eukaryota</taxon>
        <taxon>Metazoa</taxon>
        <taxon>Chordata</taxon>
        <taxon>Craniata</taxon>
        <taxon>Vertebrata</taxon>
        <taxon>Euteleostomi</taxon>
        <taxon>Mammalia</taxon>
        <taxon>Eutheria</taxon>
        <taxon>Euarchontoglires</taxon>
        <taxon>Glires</taxon>
        <taxon>Rodentia</taxon>
        <taxon>Myomorpha</taxon>
        <taxon>Muroidea</taxon>
        <taxon>Muridae</taxon>
        <taxon>Murinae</taxon>
        <taxon>Rattus</taxon>
    </lineage>
</organism>
<sequence length="247" mass="28246">MPGRSSTNSGSTRYISFSGVESALSSLKTFQSCISSGMDTVSSVALDLVETQTEVSSEYSMDKAMVEFAKMDRELNHYVKAVQSTINHVKEERPEKVPDLKLLVEKKFLALQDKNSDADFKENEKFVQFKQQLRELKKQYGIHADRENDGIEGMDEDMIVTQSQTNFICPITQLEMKKPVKNKMCGHTYEEEAIVRMIESKHKRKKKACCPKIGCSHTDMRMSDLIPDEALRRAIESHNKKKKRHSE</sequence>
<proteinExistence type="evidence at transcript level"/>
<evidence type="ECO:0000250" key="1">
    <source>
        <dbReference type="UniProtKB" id="Q96MF7"/>
    </source>
</evidence>
<evidence type="ECO:0000255" key="2">
    <source>
        <dbReference type="PROSITE-ProRule" id="PRU00452"/>
    </source>
</evidence>
<evidence type="ECO:0000305" key="3"/>
<keyword id="KW-0007">Acetylation</keyword>
<keyword id="KW-0131">Cell cycle</keyword>
<keyword id="KW-0132">Cell division</keyword>
<keyword id="KW-0158">Chromosome</keyword>
<keyword id="KW-0227">DNA damage</keyword>
<keyword id="KW-0233">DNA recombination</keyword>
<keyword id="KW-0234">DNA repair</keyword>
<keyword id="KW-1017">Isopeptide bond</keyword>
<keyword id="KW-0479">Metal-binding</keyword>
<keyword id="KW-0498">Mitosis</keyword>
<keyword id="KW-0539">Nucleus</keyword>
<keyword id="KW-0597">Phosphoprotein</keyword>
<keyword id="KW-1185">Reference proteome</keyword>
<keyword id="KW-0779">Telomere</keyword>
<keyword id="KW-0808">Transferase</keyword>
<keyword id="KW-0832">Ubl conjugation</keyword>
<keyword id="KW-0833">Ubl conjugation pathway</keyword>
<keyword id="KW-0862">Zinc</keyword>
<keyword id="KW-0863">Zinc-finger</keyword>
<reference key="1">
    <citation type="journal article" date="2004" name="Genome Res.">
        <title>The status, quality, and expansion of the NIH full-length cDNA project: the Mammalian Gene Collection (MGC).</title>
        <authorList>
            <consortium name="The MGC Project Team"/>
        </authorList>
    </citation>
    <scope>NUCLEOTIDE SEQUENCE [LARGE SCALE MRNA]</scope>
    <source>
        <tissue>Placenta</tissue>
    </source>
</reference>
<accession>Q4V8A0</accession>
<name>NSE2_RAT</name>